<reference key="1">
    <citation type="journal article" date="2008" name="Proc. Natl. Acad. Sci. U.S.A.">
        <title>Nitrogen fixation island and rhizosphere competence traits in the genome of root-associated Pseudomonas stutzeri A1501.</title>
        <authorList>
            <person name="Yan Y."/>
            <person name="Yang J."/>
            <person name="Dou Y."/>
            <person name="Chen M."/>
            <person name="Ping S."/>
            <person name="Peng J."/>
            <person name="Lu W."/>
            <person name="Zhang W."/>
            <person name="Yao Z."/>
            <person name="Li H."/>
            <person name="Liu W."/>
            <person name="He S."/>
            <person name="Geng L."/>
            <person name="Zhang X."/>
            <person name="Yang F."/>
            <person name="Yu H."/>
            <person name="Zhan Y."/>
            <person name="Li D."/>
            <person name="Lin Z."/>
            <person name="Wang Y."/>
            <person name="Elmerich C."/>
            <person name="Lin M."/>
            <person name="Jin Q."/>
        </authorList>
    </citation>
    <scope>NUCLEOTIDE SEQUENCE [LARGE SCALE GENOMIC DNA]</scope>
    <source>
        <strain>A1501</strain>
    </source>
</reference>
<sequence length="281" mass="30892">MSQKTIRVGNIEIANDKPFVLFGGINVLESRDLAMQACEEYVRVTEKLGIPYVFKASFDKANRSSITSFRGPGLEEGMKIFEKVKKTFGVPVITDVHEPWQAQPVADVCDIIQLPAFLSRQTDLVVAMAKTGAVINIKKAQFLAPQEMKHILKKCEEAGNDQLILCERGSSFGYNNLVVDMLGFGIMKQFEYPVFFDVTHALQMPGGRADSAGGRRAQVTDLAKAGLSQGLAGLFLEAHPDPDNAKCDGPCALRLNKLEAFLTQLKQLDDLVKNFPPIETA</sequence>
<organism>
    <name type="scientific">Stutzerimonas stutzeri (strain A1501)</name>
    <name type="common">Pseudomonas stutzeri</name>
    <dbReference type="NCBI Taxonomy" id="379731"/>
    <lineage>
        <taxon>Bacteria</taxon>
        <taxon>Pseudomonadati</taxon>
        <taxon>Pseudomonadota</taxon>
        <taxon>Gammaproteobacteria</taxon>
        <taxon>Pseudomonadales</taxon>
        <taxon>Pseudomonadaceae</taxon>
        <taxon>Stutzerimonas</taxon>
    </lineage>
</organism>
<comment type="catalytic activity">
    <reaction evidence="1">
        <text>D-arabinose 5-phosphate + phosphoenolpyruvate + H2O = 3-deoxy-alpha-D-manno-2-octulosonate-8-phosphate + phosphate</text>
        <dbReference type="Rhea" id="RHEA:14053"/>
        <dbReference type="ChEBI" id="CHEBI:15377"/>
        <dbReference type="ChEBI" id="CHEBI:43474"/>
        <dbReference type="ChEBI" id="CHEBI:57693"/>
        <dbReference type="ChEBI" id="CHEBI:58702"/>
        <dbReference type="ChEBI" id="CHEBI:85985"/>
        <dbReference type="EC" id="2.5.1.55"/>
    </reaction>
</comment>
<comment type="pathway">
    <text evidence="1">Carbohydrate biosynthesis; 3-deoxy-D-manno-octulosonate biosynthesis; 3-deoxy-D-manno-octulosonate from D-ribulose 5-phosphate: step 2/3.</text>
</comment>
<comment type="pathway">
    <text evidence="1">Bacterial outer membrane biogenesis; lipopolysaccharide biosynthesis.</text>
</comment>
<comment type="subcellular location">
    <subcellularLocation>
        <location evidence="1">Cytoplasm</location>
    </subcellularLocation>
</comment>
<comment type="similarity">
    <text evidence="1">Belongs to the KdsA family.</text>
</comment>
<gene>
    <name evidence="1" type="primary">kdsA</name>
    <name type="ordered locus">PST_1556</name>
</gene>
<proteinExistence type="inferred from homology"/>
<evidence type="ECO:0000255" key="1">
    <source>
        <dbReference type="HAMAP-Rule" id="MF_00056"/>
    </source>
</evidence>
<name>KDSA_STUS1</name>
<accession>A4VJU0</accession>
<keyword id="KW-0963">Cytoplasm</keyword>
<keyword id="KW-0448">Lipopolysaccharide biosynthesis</keyword>
<keyword id="KW-1185">Reference proteome</keyword>
<keyword id="KW-0808">Transferase</keyword>
<dbReference type="EC" id="2.5.1.55" evidence="1"/>
<dbReference type="EMBL" id="CP000304">
    <property type="protein sequence ID" value="ABP79241.1"/>
    <property type="molecule type" value="Genomic_DNA"/>
</dbReference>
<dbReference type="RefSeq" id="WP_011912719.1">
    <property type="nucleotide sequence ID" value="NC_009434.1"/>
</dbReference>
<dbReference type="SMR" id="A4VJU0"/>
<dbReference type="KEGG" id="psa:PST_1556"/>
<dbReference type="eggNOG" id="COG2877">
    <property type="taxonomic scope" value="Bacteria"/>
</dbReference>
<dbReference type="HOGENOM" id="CLU_036666_0_0_6"/>
<dbReference type="UniPathway" id="UPA00030"/>
<dbReference type="UniPathway" id="UPA00357">
    <property type="reaction ID" value="UER00474"/>
</dbReference>
<dbReference type="Proteomes" id="UP000000233">
    <property type="component" value="Chromosome"/>
</dbReference>
<dbReference type="GO" id="GO:0005737">
    <property type="term" value="C:cytoplasm"/>
    <property type="evidence" value="ECO:0007669"/>
    <property type="project" value="UniProtKB-SubCell"/>
</dbReference>
<dbReference type="GO" id="GO:0008676">
    <property type="term" value="F:3-deoxy-8-phosphooctulonate synthase activity"/>
    <property type="evidence" value="ECO:0007669"/>
    <property type="project" value="UniProtKB-UniRule"/>
</dbReference>
<dbReference type="GO" id="GO:0019294">
    <property type="term" value="P:keto-3-deoxy-D-manno-octulosonic acid biosynthetic process"/>
    <property type="evidence" value="ECO:0007669"/>
    <property type="project" value="UniProtKB-UniRule"/>
</dbReference>
<dbReference type="FunFam" id="3.20.20.70:FF:000058">
    <property type="entry name" value="2-dehydro-3-deoxyphosphooctonate aldolase"/>
    <property type="match status" value="1"/>
</dbReference>
<dbReference type="Gene3D" id="3.20.20.70">
    <property type="entry name" value="Aldolase class I"/>
    <property type="match status" value="1"/>
</dbReference>
<dbReference type="HAMAP" id="MF_00056">
    <property type="entry name" value="KDO8P_synth"/>
    <property type="match status" value="1"/>
</dbReference>
<dbReference type="InterPro" id="IPR013785">
    <property type="entry name" value="Aldolase_TIM"/>
</dbReference>
<dbReference type="InterPro" id="IPR006218">
    <property type="entry name" value="DAHP1/KDSA"/>
</dbReference>
<dbReference type="InterPro" id="IPR006269">
    <property type="entry name" value="KDO8P_synthase"/>
</dbReference>
<dbReference type="NCBIfam" id="TIGR01362">
    <property type="entry name" value="KDO8P_synth"/>
    <property type="match status" value="1"/>
</dbReference>
<dbReference type="NCBIfam" id="NF003543">
    <property type="entry name" value="PRK05198.1"/>
    <property type="match status" value="1"/>
</dbReference>
<dbReference type="NCBIfam" id="NF009109">
    <property type="entry name" value="PRK12457.1"/>
    <property type="match status" value="1"/>
</dbReference>
<dbReference type="PANTHER" id="PTHR21057">
    <property type="entry name" value="PHOSPHO-2-DEHYDRO-3-DEOXYHEPTONATE ALDOLASE"/>
    <property type="match status" value="1"/>
</dbReference>
<dbReference type="Pfam" id="PF00793">
    <property type="entry name" value="DAHP_synth_1"/>
    <property type="match status" value="1"/>
</dbReference>
<dbReference type="SUPFAM" id="SSF51569">
    <property type="entry name" value="Aldolase"/>
    <property type="match status" value="1"/>
</dbReference>
<feature type="chain" id="PRO_0000304474" description="2-dehydro-3-deoxyphosphooctonate aldolase">
    <location>
        <begin position="1"/>
        <end position="281"/>
    </location>
</feature>
<protein>
    <recommendedName>
        <fullName evidence="1">2-dehydro-3-deoxyphosphooctonate aldolase</fullName>
        <ecNumber evidence="1">2.5.1.55</ecNumber>
    </recommendedName>
    <alternativeName>
        <fullName evidence="1">3-deoxy-D-manno-octulosonic acid 8-phosphate synthase</fullName>
    </alternativeName>
    <alternativeName>
        <fullName evidence="1">KDO-8-phosphate synthase</fullName>
        <shortName evidence="1">KDO 8-P synthase</shortName>
        <shortName evidence="1">KDOPS</shortName>
    </alternativeName>
    <alternativeName>
        <fullName evidence="1">Phospho-2-dehydro-3-deoxyoctonate aldolase</fullName>
    </alternativeName>
</protein>